<proteinExistence type="inferred from homology"/>
<organism>
    <name type="scientific">Rickettsia canadensis (strain McKiel)</name>
    <dbReference type="NCBI Taxonomy" id="293613"/>
    <lineage>
        <taxon>Bacteria</taxon>
        <taxon>Pseudomonadati</taxon>
        <taxon>Pseudomonadota</taxon>
        <taxon>Alphaproteobacteria</taxon>
        <taxon>Rickettsiales</taxon>
        <taxon>Rickettsiaceae</taxon>
        <taxon>Rickettsieae</taxon>
        <taxon>Rickettsia</taxon>
        <taxon>belli group</taxon>
    </lineage>
</organism>
<keyword id="KW-0067">ATP-binding</keyword>
<keyword id="KW-0963">Cytoplasm</keyword>
<keyword id="KW-0418">Kinase</keyword>
<keyword id="KW-0460">Magnesium</keyword>
<keyword id="KW-0479">Metal-binding</keyword>
<keyword id="KW-0546">Nucleotide metabolism</keyword>
<keyword id="KW-0547">Nucleotide-binding</keyword>
<keyword id="KW-0597">Phosphoprotein</keyword>
<keyword id="KW-0808">Transferase</keyword>
<name>NDK_RICCK</name>
<reference key="1">
    <citation type="submission" date="2007-09" db="EMBL/GenBank/DDBJ databases">
        <title>Complete genome sequence of Rickettsia canadensis.</title>
        <authorList>
            <person name="Madan A."/>
            <person name="Fahey J."/>
            <person name="Helton E."/>
            <person name="Ketteman M."/>
            <person name="Madan A."/>
            <person name="Rodrigues S."/>
            <person name="Sanchez A."/>
            <person name="Whiting M."/>
            <person name="Dasch G."/>
            <person name="Eremeeva M."/>
        </authorList>
    </citation>
    <scope>NUCLEOTIDE SEQUENCE [LARGE SCALE GENOMIC DNA]</scope>
    <source>
        <strain>McKiel</strain>
    </source>
</reference>
<feature type="chain" id="PRO_1000026287" description="Nucleoside diphosphate kinase">
    <location>
        <begin position="1"/>
        <end position="140"/>
    </location>
</feature>
<feature type="active site" description="Pros-phosphohistidine intermediate" evidence="1">
    <location>
        <position position="117"/>
    </location>
</feature>
<feature type="binding site" evidence="1">
    <location>
        <position position="11"/>
    </location>
    <ligand>
        <name>ATP</name>
        <dbReference type="ChEBI" id="CHEBI:30616"/>
    </ligand>
</feature>
<feature type="binding site" evidence="1">
    <location>
        <position position="59"/>
    </location>
    <ligand>
        <name>ATP</name>
        <dbReference type="ChEBI" id="CHEBI:30616"/>
    </ligand>
</feature>
<feature type="binding site" evidence="1">
    <location>
        <position position="87"/>
    </location>
    <ligand>
        <name>ATP</name>
        <dbReference type="ChEBI" id="CHEBI:30616"/>
    </ligand>
</feature>
<feature type="binding site" evidence="1">
    <location>
        <position position="93"/>
    </location>
    <ligand>
        <name>ATP</name>
        <dbReference type="ChEBI" id="CHEBI:30616"/>
    </ligand>
</feature>
<feature type="binding site" evidence="1">
    <location>
        <position position="104"/>
    </location>
    <ligand>
        <name>ATP</name>
        <dbReference type="ChEBI" id="CHEBI:30616"/>
    </ligand>
</feature>
<feature type="binding site" evidence="1">
    <location>
        <position position="114"/>
    </location>
    <ligand>
        <name>ATP</name>
        <dbReference type="ChEBI" id="CHEBI:30616"/>
    </ligand>
</feature>
<evidence type="ECO:0000255" key="1">
    <source>
        <dbReference type="HAMAP-Rule" id="MF_00451"/>
    </source>
</evidence>
<protein>
    <recommendedName>
        <fullName evidence="1">Nucleoside diphosphate kinase</fullName>
        <shortName evidence="1">NDK</shortName>
        <shortName evidence="1">NDP kinase</shortName>
        <ecNumber evidence="1">2.7.4.6</ecNumber>
    </recommendedName>
    <alternativeName>
        <fullName evidence="1">Nucleoside-2-P kinase</fullName>
    </alternativeName>
</protein>
<accession>A8EXC2</accession>
<gene>
    <name evidence="1" type="primary">ndk</name>
    <name type="ordered locus">A1E_00260</name>
</gene>
<sequence length="140" mass="15868">MTIQYTFSMIKPDAIKRNKIGQINTYLENAGLKIVAQKMKYLTKYEAECFYDEHRARPFFNSLVEYITSGAVVLQVLKGTDAITLNRKIMGATNPDEAEAGTIRKDFGESIEANSIHGSDSQNSAKREIEFFFNKSEIIE</sequence>
<comment type="function">
    <text evidence="1">Major role in the synthesis of nucleoside triphosphates other than ATP. The ATP gamma phosphate is transferred to the NDP beta phosphate via a ping-pong mechanism, using a phosphorylated active-site intermediate.</text>
</comment>
<comment type="catalytic activity">
    <reaction evidence="1">
        <text>a 2'-deoxyribonucleoside 5'-diphosphate + ATP = a 2'-deoxyribonucleoside 5'-triphosphate + ADP</text>
        <dbReference type="Rhea" id="RHEA:44640"/>
        <dbReference type="ChEBI" id="CHEBI:30616"/>
        <dbReference type="ChEBI" id="CHEBI:61560"/>
        <dbReference type="ChEBI" id="CHEBI:73316"/>
        <dbReference type="ChEBI" id="CHEBI:456216"/>
        <dbReference type="EC" id="2.7.4.6"/>
    </reaction>
</comment>
<comment type="catalytic activity">
    <reaction evidence="1">
        <text>a ribonucleoside 5'-diphosphate + ATP = a ribonucleoside 5'-triphosphate + ADP</text>
        <dbReference type="Rhea" id="RHEA:18113"/>
        <dbReference type="ChEBI" id="CHEBI:30616"/>
        <dbReference type="ChEBI" id="CHEBI:57930"/>
        <dbReference type="ChEBI" id="CHEBI:61557"/>
        <dbReference type="ChEBI" id="CHEBI:456216"/>
        <dbReference type="EC" id="2.7.4.6"/>
    </reaction>
</comment>
<comment type="cofactor">
    <cofactor evidence="1">
        <name>Mg(2+)</name>
        <dbReference type="ChEBI" id="CHEBI:18420"/>
    </cofactor>
</comment>
<comment type="subunit">
    <text evidence="1">Homotetramer.</text>
</comment>
<comment type="subcellular location">
    <subcellularLocation>
        <location evidence="1">Cytoplasm</location>
    </subcellularLocation>
</comment>
<comment type="similarity">
    <text evidence="1">Belongs to the NDK family.</text>
</comment>
<dbReference type="EC" id="2.7.4.6" evidence="1"/>
<dbReference type="EMBL" id="CP000409">
    <property type="protein sequence ID" value="ABV73005.1"/>
    <property type="molecule type" value="Genomic_DNA"/>
</dbReference>
<dbReference type="RefSeq" id="WP_012148206.1">
    <property type="nucleotide sequence ID" value="NC_009879.1"/>
</dbReference>
<dbReference type="SMR" id="A8EXC2"/>
<dbReference type="STRING" id="293613.A1E_00260"/>
<dbReference type="KEGG" id="rcm:A1E_00260"/>
<dbReference type="eggNOG" id="COG0105">
    <property type="taxonomic scope" value="Bacteria"/>
</dbReference>
<dbReference type="HOGENOM" id="CLU_060216_8_1_5"/>
<dbReference type="Proteomes" id="UP000007056">
    <property type="component" value="Chromosome"/>
</dbReference>
<dbReference type="GO" id="GO:0005737">
    <property type="term" value="C:cytoplasm"/>
    <property type="evidence" value="ECO:0007669"/>
    <property type="project" value="UniProtKB-SubCell"/>
</dbReference>
<dbReference type="GO" id="GO:0005524">
    <property type="term" value="F:ATP binding"/>
    <property type="evidence" value="ECO:0007669"/>
    <property type="project" value="UniProtKB-UniRule"/>
</dbReference>
<dbReference type="GO" id="GO:0046872">
    <property type="term" value="F:metal ion binding"/>
    <property type="evidence" value="ECO:0007669"/>
    <property type="project" value="UniProtKB-KW"/>
</dbReference>
<dbReference type="GO" id="GO:0004550">
    <property type="term" value="F:nucleoside diphosphate kinase activity"/>
    <property type="evidence" value="ECO:0007669"/>
    <property type="project" value="UniProtKB-UniRule"/>
</dbReference>
<dbReference type="GO" id="GO:0006241">
    <property type="term" value="P:CTP biosynthetic process"/>
    <property type="evidence" value="ECO:0007669"/>
    <property type="project" value="UniProtKB-UniRule"/>
</dbReference>
<dbReference type="GO" id="GO:0006183">
    <property type="term" value="P:GTP biosynthetic process"/>
    <property type="evidence" value="ECO:0007669"/>
    <property type="project" value="UniProtKB-UniRule"/>
</dbReference>
<dbReference type="GO" id="GO:0006228">
    <property type="term" value="P:UTP biosynthetic process"/>
    <property type="evidence" value="ECO:0007669"/>
    <property type="project" value="UniProtKB-UniRule"/>
</dbReference>
<dbReference type="CDD" id="cd04413">
    <property type="entry name" value="NDPk_I"/>
    <property type="match status" value="1"/>
</dbReference>
<dbReference type="FunFam" id="3.30.70.141:FF:000003">
    <property type="entry name" value="Nucleoside diphosphate kinase"/>
    <property type="match status" value="1"/>
</dbReference>
<dbReference type="Gene3D" id="3.30.70.141">
    <property type="entry name" value="Nucleoside diphosphate kinase-like domain"/>
    <property type="match status" value="1"/>
</dbReference>
<dbReference type="HAMAP" id="MF_00451">
    <property type="entry name" value="NDP_kinase"/>
    <property type="match status" value="1"/>
</dbReference>
<dbReference type="InterPro" id="IPR034907">
    <property type="entry name" value="NDK-like_dom"/>
</dbReference>
<dbReference type="InterPro" id="IPR036850">
    <property type="entry name" value="NDK-like_dom_sf"/>
</dbReference>
<dbReference type="InterPro" id="IPR001564">
    <property type="entry name" value="Nucleoside_diP_kinase"/>
</dbReference>
<dbReference type="NCBIfam" id="NF001908">
    <property type="entry name" value="PRK00668.1"/>
    <property type="match status" value="1"/>
</dbReference>
<dbReference type="PANTHER" id="PTHR46161">
    <property type="entry name" value="NUCLEOSIDE DIPHOSPHATE KINASE"/>
    <property type="match status" value="1"/>
</dbReference>
<dbReference type="PANTHER" id="PTHR46161:SF3">
    <property type="entry name" value="NUCLEOSIDE DIPHOSPHATE KINASE DDB_G0292928-RELATED"/>
    <property type="match status" value="1"/>
</dbReference>
<dbReference type="Pfam" id="PF00334">
    <property type="entry name" value="NDK"/>
    <property type="match status" value="1"/>
</dbReference>
<dbReference type="PRINTS" id="PR01243">
    <property type="entry name" value="NUCDPKINASE"/>
</dbReference>
<dbReference type="SMART" id="SM00562">
    <property type="entry name" value="NDK"/>
    <property type="match status" value="1"/>
</dbReference>
<dbReference type="SUPFAM" id="SSF54919">
    <property type="entry name" value="Nucleoside diphosphate kinase, NDK"/>
    <property type="match status" value="1"/>
</dbReference>
<dbReference type="PROSITE" id="PS51374">
    <property type="entry name" value="NDPK_LIKE"/>
    <property type="match status" value="1"/>
</dbReference>